<protein>
    <recommendedName>
        <fullName evidence="1">8-amino-7-oxononanoate synthase</fullName>
        <shortName evidence="1">AONS</shortName>
        <ecNumber evidence="1">2.3.1.47</ecNumber>
    </recommendedName>
    <alternativeName>
        <fullName evidence="1">7-keto-8-amino-pelargonic acid synthase</fullName>
        <shortName evidence="1">7-KAP synthase</shortName>
        <shortName evidence="1">KAPA synthase</shortName>
    </alternativeName>
    <alternativeName>
        <fullName evidence="1">8-amino-7-ketopelargonate synthase</fullName>
    </alternativeName>
</protein>
<keyword id="KW-0093">Biotin biosynthesis</keyword>
<keyword id="KW-0663">Pyridoxal phosphate</keyword>
<keyword id="KW-0808">Transferase</keyword>
<evidence type="ECO:0000255" key="1">
    <source>
        <dbReference type="HAMAP-Rule" id="MF_01693"/>
    </source>
</evidence>
<evidence type="ECO:0000305" key="2"/>
<dbReference type="EC" id="2.3.1.47" evidence="1"/>
<dbReference type="EMBL" id="CP000124">
    <property type="protein sequence ID" value="ABA48675.1"/>
    <property type="status" value="ALT_INIT"/>
    <property type="molecule type" value="Genomic_DNA"/>
</dbReference>
<dbReference type="RefSeq" id="WP_004525972.1">
    <property type="nucleotide sequence ID" value="NC_007434.1"/>
</dbReference>
<dbReference type="SMR" id="Q3JWR6"/>
<dbReference type="EnsemblBacteria" id="ABA48675">
    <property type="protein sequence ID" value="ABA48675"/>
    <property type="gene ID" value="BURPS1710b_0573"/>
</dbReference>
<dbReference type="KEGG" id="bpm:BURPS1710b_0573"/>
<dbReference type="HOGENOM" id="CLU_015846_11_2_4"/>
<dbReference type="UniPathway" id="UPA00078"/>
<dbReference type="Proteomes" id="UP000002700">
    <property type="component" value="Chromosome I"/>
</dbReference>
<dbReference type="GO" id="GO:0008710">
    <property type="term" value="F:8-amino-7-oxononanoate synthase activity"/>
    <property type="evidence" value="ECO:0007669"/>
    <property type="project" value="UniProtKB-UniRule"/>
</dbReference>
<dbReference type="GO" id="GO:0030170">
    <property type="term" value="F:pyridoxal phosphate binding"/>
    <property type="evidence" value="ECO:0007669"/>
    <property type="project" value="UniProtKB-UniRule"/>
</dbReference>
<dbReference type="GO" id="GO:0009102">
    <property type="term" value="P:biotin biosynthetic process"/>
    <property type="evidence" value="ECO:0007669"/>
    <property type="project" value="UniProtKB-UniRule"/>
</dbReference>
<dbReference type="Gene3D" id="3.90.1150.10">
    <property type="entry name" value="Aspartate Aminotransferase, domain 1"/>
    <property type="match status" value="1"/>
</dbReference>
<dbReference type="Gene3D" id="3.40.640.10">
    <property type="entry name" value="Type I PLP-dependent aspartate aminotransferase-like (Major domain)"/>
    <property type="match status" value="1"/>
</dbReference>
<dbReference type="HAMAP" id="MF_01693">
    <property type="entry name" value="BioF_aminotrans_2"/>
    <property type="match status" value="1"/>
</dbReference>
<dbReference type="InterPro" id="IPR004839">
    <property type="entry name" value="Aminotransferase_I/II_large"/>
</dbReference>
<dbReference type="InterPro" id="IPR050087">
    <property type="entry name" value="AON_synthase_class-II"/>
</dbReference>
<dbReference type="InterPro" id="IPR004723">
    <property type="entry name" value="AONS_Archaea/Proteobacteria"/>
</dbReference>
<dbReference type="InterPro" id="IPR022834">
    <property type="entry name" value="AONS_Proteobacteria"/>
</dbReference>
<dbReference type="InterPro" id="IPR015424">
    <property type="entry name" value="PyrdxlP-dep_Trfase"/>
</dbReference>
<dbReference type="InterPro" id="IPR015421">
    <property type="entry name" value="PyrdxlP-dep_Trfase_major"/>
</dbReference>
<dbReference type="InterPro" id="IPR015422">
    <property type="entry name" value="PyrdxlP-dep_Trfase_small"/>
</dbReference>
<dbReference type="NCBIfam" id="TIGR00858">
    <property type="entry name" value="bioF"/>
    <property type="match status" value="1"/>
</dbReference>
<dbReference type="PANTHER" id="PTHR13693:SF100">
    <property type="entry name" value="8-AMINO-7-OXONONANOATE SYNTHASE"/>
    <property type="match status" value="1"/>
</dbReference>
<dbReference type="PANTHER" id="PTHR13693">
    <property type="entry name" value="CLASS II AMINOTRANSFERASE/8-AMINO-7-OXONONANOATE SYNTHASE"/>
    <property type="match status" value="1"/>
</dbReference>
<dbReference type="Pfam" id="PF00155">
    <property type="entry name" value="Aminotran_1_2"/>
    <property type="match status" value="1"/>
</dbReference>
<dbReference type="SUPFAM" id="SSF53383">
    <property type="entry name" value="PLP-dependent transferases"/>
    <property type="match status" value="1"/>
</dbReference>
<organism>
    <name type="scientific">Burkholderia pseudomallei (strain 1710b)</name>
    <dbReference type="NCBI Taxonomy" id="320372"/>
    <lineage>
        <taxon>Bacteria</taxon>
        <taxon>Pseudomonadati</taxon>
        <taxon>Pseudomonadota</taxon>
        <taxon>Betaproteobacteria</taxon>
        <taxon>Burkholderiales</taxon>
        <taxon>Burkholderiaceae</taxon>
        <taxon>Burkholderia</taxon>
        <taxon>pseudomallei group</taxon>
    </lineage>
</organism>
<reference key="1">
    <citation type="journal article" date="2010" name="Genome Biol. Evol.">
        <title>Continuing evolution of Burkholderia mallei through genome reduction and large-scale rearrangements.</title>
        <authorList>
            <person name="Losada L."/>
            <person name="Ronning C.M."/>
            <person name="DeShazer D."/>
            <person name="Woods D."/>
            <person name="Fedorova N."/>
            <person name="Kim H.S."/>
            <person name="Shabalina S.A."/>
            <person name="Pearson T.R."/>
            <person name="Brinkac L."/>
            <person name="Tan P."/>
            <person name="Nandi T."/>
            <person name="Crabtree J."/>
            <person name="Badger J."/>
            <person name="Beckstrom-Sternberg S."/>
            <person name="Saqib M."/>
            <person name="Schutzer S.E."/>
            <person name="Keim P."/>
            <person name="Nierman W.C."/>
        </authorList>
    </citation>
    <scope>NUCLEOTIDE SEQUENCE [LARGE SCALE GENOMIC DNA]</scope>
    <source>
        <strain>1710b</strain>
    </source>
</reference>
<comment type="function">
    <text evidence="1">Catalyzes the decarboxylative condensation of pimeloyl-[acyl-carrier protein] and L-alanine to produce 8-amino-7-oxononanoate (AON), [acyl-carrier protein], and carbon dioxide.</text>
</comment>
<comment type="catalytic activity">
    <reaction evidence="1">
        <text>6-carboxyhexanoyl-[ACP] + L-alanine + H(+) = (8S)-8-amino-7-oxononanoate + holo-[ACP] + CO2</text>
        <dbReference type="Rhea" id="RHEA:42288"/>
        <dbReference type="Rhea" id="RHEA-COMP:9685"/>
        <dbReference type="Rhea" id="RHEA-COMP:9955"/>
        <dbReference type="ChEBI" id="CHEBI:15378"/>
        <dbReference type="ChEBI" id="CHEBI:16526"/>
        <dbReference type="ChEBI" id="CHEBI:57972"/>
        <dbReference type="ChEBI" id="CHEBI:64479"/>
        <dbReference type="ChEBI" id="CHEBI:78846"/>
        <dbReference type="ChEBI" id="CHEBI:149468"/>
        <dbReference type="EC" id="2.3.1.47"/>
    </reaction>
</comment>
<comment type="cofactor">
    <cofactor evidence="1">
        <name>pyridoxal 5'-phosphate</name>
        <dbReference type="ChEBI" id="CHEBI:597326"/>
    </cofactor>
</comment>
<comment type="pathway">
    <text evidence="1">Cofactor biosynthesis; biotin biosynthesis.</text>
</comment>
<comment type="subunit">
    <text evidence="1">Homodimer.</text>
</comment>
<comment type="similarity">
    <text evidence="1">Belongs to the class-II pyridoxal-phosphate-dependent aminotransferase family. BioF subfamily.</text>
</comment>
<comment type="sequence caution" evidence="2">
    <conflict type="erroneous initiation">
        <sequence resource="EMBL-CDS" id="ABA48675"/>
    </conflict>
</comment>
<sequence length="394" mass="40698">MNPLATLEQGLADIDAQGLRRCRRVADTACGAHMTVDGRAIIGFASNDYLGLAAHPRLVEAFAEGARRYGSGSGGSHLLGGHSRAHATLEDQLAAFSGGFSDAPRALYFSTGYMANLAALTALAGRGATIFSDALNHASLIDGARLSRANVQIYPHGDADALDARLRACDAPTKLIVSDTVFSMDGDVAPLARLVALAETHGAWLVVDDAHGFGVLGPQGRGALAAHGLRSPNLVYVGTLGKAAGVAGAFVVAHETVIEWLVQRARSYIFTTAAPPSVACAVSASLAVIASDEGDARRAHLGALIKRTRAILRATHWQPVDSHTAVQPLVIGSNEATLAAMAALDAQGLWVPAIRPPTVPAGTSRLRISLSAAHSFDDLARLEAALVTPIGAAA</sequence>
<accession>Q3JWR6</accession>
<feature type="chain" id="PRO_0000380939" description="8-amino-7-oxononanoate synthase">
    <location>
        <begin position="1"/>
        <end position="394"/>
    </location>
</feature>
<feature type="binding site" evidence="1">
    <location>
        <position position="21"/>
    </location>
    <ligand>
        <name>substrate</name>
    </ligand>
</feature>
<feature type="binding site" evidence="1">
    <location>
        <begin position="112"/>
        <end position="113"/>
    </location>
    <ligand>
        <name>pyridoxal 5'-phosphate</name>
        <dbReference type="ChEBI" id="CHEBI:597326"/>
    </ligand>
</feature>
<feature type="binding site" evidence="1">
    <location>
        <position position="137"/>
    </location>
    <ligand>
        <name>substrate</name>
    </ligand>
</feature>
<feature type="binding site" evidence="1">
    <location>
        <position position="183"/>
    </location>
    <ligand>
        <name>pyridoxal 5'-phosphate</name>
        <dbReference type="ChEBI" id="CHEBI:597326"/>
    </ligand>
</feature>
<feature type="binding site" evidence="1">
    <location>
        <position position="211"/>
    </location>
    <ligand>
        <name>pyridoxal 5'-phosphate</name>
        <dbReference type="ChEBI" id="CHEBI:597326"/>
    </ligand>
</feature>
<feature type="binding site" evidence="1">
    <location>
        <position position="239"/>
    </location>
    <ligand>
        <name>pyridoxal 5'-phosphate</name>
        <dbReference type="ChEBI" id="CHEBI:597326"/>
    </ligand>
</feature>
<feature type="binding site" evidence="1">
    <location>
        <position position="358"/>
    </location>
    <ligand>
        <name>substrate</name>
    </ligand>
</feature>
<feature type="modified residue" description="N6-(pyridoxal phosphate)lysine" evidence="1">
    <location>
        <position position="242"/>
    </location>
</feature>
<gene>
    <name evidence="1" type="primary">bioF</name>
    <name type="ordered locus">BURPS1710b_0573</name>
</gene>
<proteinExistence type="inferred from homology"/>
<name>BIOF_BURP1</name>